<evidence type="ECO:0000255" key="1">
    <source>
        <dbReference type="HAMAP-Rule" id="MF_00615"/>
    </source>
</evidence>
<feature type="chain" id="PRO_1000061337" description="DNA-directed RNA polymerase subunit Rpo12">
    <location>
        <begin position="1"/>
        <end position="45"/>
    </location>
</feature>
<feature type="binding site" evidence="1">
    <location>
        <position position="8"/>
    </location>
    <ligand>
        <name>Zn(2+)</name>
        <dbReference type="ChEBI" id="CHEBI:29105"/>
    </ligand>
</feature>
<feature type="binding site" evidence="1">
    <location>
        <position position="23"/>
    </location>
    <ligand>
        <name>Zn(2+)</name>
        <dbReference type="ChEBI" id="CHEBI:29105"/>
    </ligand>
</feature>
<feature type="binding site" evidence="1">
    <location>
        <position position="26"/>
    </location>
    <ligand>
        <name>Zn(2+)</name>
        <dbReference type="ChEBI" id="CHEBI:29105"/>
    </ligand>
</feature>
<name>RPO12_METBF</name>
<dbReference type="EC" id="2.7.7.6" evidence="1"/>
<dbReference type="EMBL" id="CP000099">
    <property type="protein sequence ID" value="AAZ71422.1"/>
    <property type="molecule type" value="Genomic_DNA"/>
</dbReference>
<dbReference type="SMR" id="Q469M0"/>
<dbReference type="STRING" id="269797.Mbar_A2509"/>
<dbReference type="PaxDb" id="269797-Mbar_A2509"/>
<dbReference type="KEGG" id="mba:Mbar_A2509"/>
<dbReference type="eggNOG" id="arCOG04341">
    <property type="taxonomic scope" value="Archaea"/>
</dbReference>
<dbReference type="HOGENOM" id="CLU_179456_2_1_2"/>
<dbReference type="OrthoDB" id="129238at2157"/>
<dbReference type="GO" id="GO:0005737">
    <property type="term" value="C:cytoplasm"/>
    <property type="evidence" value="ECO:0007669"/>
    <property type="project" value="UniProtKB-SubCell"/>
</dbReference>
<dbReference type="GO" id="GO:0000428">
    <property type="term" value="C:DNA-directed RNA polymerase complex"/>
    <property type="evidence" value="ECO:0007669"/>
    <property type="project" value="UniProtKB-KW"/>
</dbReference>
<dbReference type="GO" id="GO:0003677">
    <property type="term" value="F:DNA binding"/>
    <property type="evidence" value="ECO:0007669"/>
    <property type="project" value="InterPro"/>
</dbReference>
<dbReference type="GO" id="GO:0003899">
    <property type="term" value="F:DNA-directed RNA polymerase activity"/>
    <property type="evidence" value="ECO:0007669"/>
    <property type="project" value="UniProtKB-UniRule"/>
</dbReference>
<dbReference type="GO" id="GO:0008270">
    <property type="term" value="F:zinc ion binding"/>
    <property type="evidence" value="ECO:0007669"/>
    <property type="project" value="UniProtKB-UniRule"/>
</dbReference>
<dbReference type="GO" id="GO:0006351">
    <property type="term" value="P:DNA-templated transcription"/>
    <property type="evidence" value="ECO:0007669"/>
    <property type="project" value="UniProtKB-UniRule"/>
</dbReference>
<dbReference type="Gene3D" id="2.20.28.30">
    <property type="entry name" value="RNA polymerase ii, chain L"/>
    <property type="match status" value="1"/>
</dbReference>
<dbReference type="HAMAP" id="MF_00615">
    <property type="entry name" value="RNApol_arch_Rpo12"/>
    <property type="match status" value="1"/>
</dbReference>
<dbReference type="InterPro" id="IPR006591">
    <property type="entry name" value="RNAP_P/RPABC4"/>
</dbReference>
<dbReference type="InterPro" id="IPR029040">
    <property type="entry name" value="RPABC4/Spt4"/>
</dbReference>
<dbReference type="InterPro" id="IPR023464">
    <property type="entry name" value="Rpo12"/>
</dbReference>
<dbReference type="NCBIfam" id="NF001606">
    <property type="entry name" value="PRK00398.1-3"/>
    <property type="match status" value="1"/>
</dbReference>
<dbReference type="Pfam" id="PF03604">
    <property type="entry name" value="Zn_ribbon_RPAB4"/>
    <property type="match status" value="1"/>
</dbReference>
<dbReference type="SMART" id="SM00659">
    <property type="entry name" value="RPOLCX"/>
    <property type="match status" value="1"/>
</dbReference>
<dbReference type="SUPFAM" id="SSF63393">
    <property type="entry name" value="RNA polymerase subunits"/>
    <property type="match status" value="1"/>
</dbReference>
<proteinExistence type="inferred from homology"/>
<comment type="function">
    <text evidence="1">DNA-dependent RNA polymerase (RNAP) catalyzes the transcription of DNA into RNA using the four ribonucleoside triphosphates as substrates.</text>
</comment>
<comment type="catalytic activity">
    <reaction evidence="1">
        <text>RNA(n) + a ribonucleoside 5'-triphosphate = RNA(n+1) + diphosphate</text>
        <dbReference type="Rhea" id="RHEA:21248"/>
        <dbReference type="Rhea" id="RHEA-COMP:14527"/>
        <dbReference type="Rhea" id="RHEA-COMP:17342"/>
        <dbReference type="ChEBI" id="CHEBI:33019"/>
        <dbReference type="ChEBI" id="CHEBI:61557"/>
        <dbReference type="ChEBI" id="CHEBI:140395"/>
        <dbReference type="EC" id="2.7.7.6"/>
    </reaction>
</comment>
<comment type="cofactor">
    <cofactor evidence="1">
        <name>Zn(2+)</name>
        <dbReference type="ChEBI" id="CHEBI:29105"/>
    </cofactor>
    <text evidence="1">Binds 1 zinc ion.</text>
</comment>
<comment type="subunit">
    <text evidence="1">Part of the RNA polymerase complex.</text>
</comment>
<comment type="subcellular location">
    <subcellularLocation>
        <location evidence="1">Cytoplasm</location>
    </subcellularLocation>
</comment>
<comment type="similarity">
    <text evidence="1">Belongs to the archaeal Rpo12/eukaryotic RPC10 RNA polymerase subunit family.</text>
</comment>
<sequence length="45" mass="5379">MGYKCTRCKQKVEIDYEYTGIRCPYCGHRILVKERPTTIKRIKAE</sequence>
<organism>
    <name type="scientific">Methanosarcina barkeri (strain Fusaro / DSM 804)</name>
    <dbReference type="NCBI Taxonomy" id="269797"/>
    <lineage>
        <taxon>Archaea</taxon>
        <taxon>Methanobacteriati</taxon>
        <taxon>Methanobacteriota</taxon>
        <taxon>Stenosarchaea group</taxon>
        <taxon>Methanomicrobia</taxon>
        <taxon>Methanosarcinales</taxon>
        <taxon>Methanosarcinaceae</taxon>
        <taxon>Methanosarcina</taxon>
    </lineage>
</organism>
<reference key="1">
    <citation type="journal article" date="2006" name="J. Bacteriol.">
        <title>The Methanosarcina barkeri genome: comparative analysis with Methanosarcina acetivorans and Methanosarcina mazei reveals extensive rearrangement within methanosarcinal genomes.</title>
        <authorList>
            <person name="Maeder D.L."/>
            <person name="Anderson I."/>
            <person name="Brettin T.S."/>
            <person name="Bruce D.C."/>
            <person name="Gilna P."/>
            <person name="Han C.S."/>
            <person name="Lapidus A."/>
            <person name="Metcalf W.W."/>
            <person name="Saunders E."/>
            <person name="Tapia R."/>
            <person name="Sowers K.R."/>
        </authorList>
    </citation>
    <scope>NUCLEOTIDE SEQUENCE [LARGE SCALE GENOMIC DNA]</scope>
    <source>
        <strain>Fusaro / DSM 804</strain>
    </source>
</reference>
<keyword id="KW-0963">Cytoplasm</keyword>
<keyword id="KW-0240">DNA-directed RNA polymerase</keyword>
<keyword id="KW-0479">Metal-binding</keyword>
<keyword id="KW-0548">Nucleotidyltransferase</keyword>
<keyword id="KW-0804">Transcription</keyword>
<keyword id="KW-0808">Transferase</keyword>
<keyword id="KW-0862">Zinc</keyword>
<gene>
    <name evidence="1" type="primary">rpo12</name>
    <name evidence="1" type="synonym">rpoP</name>
    <name type="ordered locus">Mbar_A2509</name>
</gene>
<protein>
    <recommendedName>
        <fullName evidence="1">DNA-directed RNA polymerase subunit Rpo12</fullName>
        <ecNumber evidence="1">2.7.7.6</ecNumber>
    </recommendedName>
    <alternativeName>
        <fullName evidence="1">DNA-directed RNA polymerase subunit P</fullName>
    </alternativeName>
</protein>
<accession>Q469M0</accession>